<keyword id="KW-1185">Reference proteome</keyword>
<keyword id="KW-0687">Ribonucleoprotein</keyword>
<keyword id="KW-0689">Ribosomal protein</keyword>
<name>RL36_GLOC7</name>
<dbReference type="EMBL" id="CP001291">
    <property type="protein sequence ID" value="ACK72105.1"/>
    <property type="molecule type" value="Genomic_DNA"/>
</dbReference>
<dbReference type="RefSeq" id="WP_013324968.1">
    <property type="nucleotide sequence ID" value="NC_011729.1"/>
</dbReference>
<dbReference type="SMR" id="B7KI08"/>
<dbReference type="STRING" id="65393.PCC7424_3724"/>
<dbReference type="KEGG" id="cyc:PCC7424_3724"/>
<dbReference type="eggNOG" id="COG0257">
    <property type="taxonomic scope" value="Bacteria"/>
</dbReference>
<dbReference type="HOGENOM" id="CLU_135723_6_2_3"/>
<dbReference type="Proteomes" id="UP000002384">
    <property type="component" value="Chromosome"/>
</dbReference>
<dbReference type="GO" id="GO:0005737">
    <property type="term" value="C:cytoplasm"/>
    <property type="evidence" value="ECO:0007669"/>
    <property type="project" value="UniProtKB-ARBA"/>
</dbReference>
<dbReference type="GO" id="GO:1990904">
    <property type="term" value="C:ribonucleoprotein complex"/>
    <property type="evidence" value="ECO:0007669"/>
    <property type="project" value="UniProtKB-KW"/>
</dbReference>
<dbReference type="GO" id="GO:0005840">
    <property type="term" value="C:ribosome"/>
    <property type="evidence" value="ECO:0007669"/>
    <property type="project" value="UniProtKB-KW"/>
</dbReference>
<dbReference type="GO" id="GO:0003735">
    <property type="term" value="F:structural constituent of ribosome"/>
    <property type="evidence" value="ECO:0007669"/>
    <property type="project" value="InterPro"/>
</dbReference>
<dbReference type="GO" id="GO:0006412">
    <property type="term" value="P:translation"/>
    <property type="evidence" value="ECO:0007669"/>
    <property type="project" value="UniProtKB-UniRule"/>
</dbReference>
<dbReference type="HAMAP" id="MF_00251">
    <property type="entry name" value="Ribosomal_bL36"/>
    <property type="match status" value="1"/>
</dbReference>
<dbReference type="InterPro" id="IPR000473">
    <property type="entry name" value="Ribosomal_bL36"/>
</dbReference>
<dbReference type="InterPro" id="IPR035977">
    <property type="entry name" value="Ribosomal_bL36_sp"/>
</dbReference>
<dbReference type="NCBIfam" id="TIGR01022">
    <property type="entry name" value="rpmJ_bact"/>
    <property type="match status" value="1"/>
</dbReference>
<dbReference type="PANTHER" id="PTHR42888">
    <property type="entry name" value="50S RIBOSOMAL PROTEIN L36, CHLOROPLASTIC"/>
    <property type="match status" value="1"/>
</dbReference>
<dbReference type="PANTHER" id="PTHR42888:SF1">
    <property type="entry name" value="LARGE RIBOSOMAL SUBUNIT PROTEIN BL36C"/>
    <property type="match status" value="1"/>
</dbReference>
<dbReference type="Pfam" id="PF00444">
    <property type="entry name" value="Ribosomal_L36"/>
    <property type="match status" value="1"/>
</dbReference>
<dbReference type="SUPFAM" id="SSF57840">
    <property type="entry name" value="Ribosomal protein L36"/>
    <property type="match status" value="1"/>
</dbReference>
<dbReference type="PROSITE" id="PS00828">
    <property type="entry name" value="RIBOSOMAL_L36"/>
    <property type="match status" value="1"/>
</dbReference>
<evidence type="ECO:0000255" key="1">
    <source>
        <dbReference type="HAMAP-Rule" id="MF_00251"/>
    </source>
</evidence>
<evidence type="ECO:0000305" key="2"/>
<accession>B7KI08</accession>
<organism>
    <name type="scientific">Gloeothece citriformis (strain PCC 7424)</name>
    <name type="common">Cyanothece sp. (strain PCC 7424)</name>
    <dbReference type="NCBI Taxonomy" id="65393"/>
    <lineage>
        <taxon>Bacteria</taxon>
        <taxon>Bacillati</taxon>
        <taxon>Cyanobacteriota</taxon>
        <taxon>Cyanophyceae</taxon>
        <taxon>Oscillatoriophycideae</taxon>
        <taxon>Chroococcales</taxon>
        <taxon>Aphanothecaceae</taxon>
        <taxon>Gloeothece</taxon>
        <taxon>Gloeothece citriformis</taxon>
    </lineage>
</organism>
<reference key="1">
    <citation type="journal article" date="2011" name="MBio">
        <title>Novel metabolic attributes of the genus Cyanothece, comprising a group of unicellular nitrogen-fixing Cyanobacteria.</title>
        <authorList>
            <person name="Bandyopadhyay A."/>
            <person name="Elvitigala T."/>
            <person name="Welsh E."/>
            <person name="Stockel J."/>
            <person name="Liberton M."/>
            <person name="Min H."/>
            <person name="Sherman L.A."/>
            <person name="Pakrasi H.B."/>
        </authorList>
    </citation>
    <scope>NUCLEOTIDE SEQUENCE [LARGE SCALE GENOMIC DNA]</scope>
    <source>
        <strain>PCC 7424</strain>
    </source>
</reference>
<gene>
    <name evidence="1" type="primary">rpmJ</name>
    <name type="ordered locus">PCC7424_3724</name>
</gene>
<sequence length="37" mass="4424">MKVRPSVKKMCEKCRVIRRRGRVMVICSNPKHKQRQG</sequence>
<proteinExistence type="inferred from homology"/>
<feature type="chain" id="PRO_1000196182" description="Large ribosomal subunit protein bL36">
    <location>
        <begin position="1"/>
        <end position="37"/>
    </location>
</feature>
<protein>
    <recommendedName>
        <fullName evidence="1">Large ribosomal subunit protein bL36</fullName>
    </recommendedName>
    <alternativeName>
        <fullName evidence="2">50S ribosomal protein L36</fullName>
    </alternativeName>
</protein>
<comment type="similarity">
    <text evidence="1">Belongs to the bacterial ribosomal protein bL36 family.</text>
</comment>